<name>3BP2_MOUSE</name>
<accession>Q06649</accession>
<feature type="chain" id="PRO_0000064366" description="SH3 domain-binding protein 2">
    <location>
        <begin position="1"/>
        <end position="559"/>
    </location>
</feature>
<feature type="domain" description="PH" evidence="3">
    <location>
        <begin position="26"/>
        <end position="130"/>
    </location>
</feature>
<feature type="domain" description="SH2" evidence="4">
    <location>
        <begin position="455"/>
        <end position="553"/>
    </location>
</feature>
<feature type="region of interest" description="Disordered" evidence="5">
    <location>
        <begin position="164"/>
        <end position="449"/>
    </location>
</feature>
<feature type="short sequence motif" description="SH3-binding">
    <location>
        <begin position="201"/>
        <end position="210"/>
    </location>
</feature>
<feature type="compositionally biased region" description="Acidic residues" evidence="5">
    <location>
        <begin position="170"/>
        <end position="184"/>
    </location>
</feature>
<feature type="compositionally biased region" description="Pro residues" evidence="5">
    <location>
        <begin position="202"/>
        <end position="213"/>
    </location>
</feature>
<feature type="compositionally biased region" description="Pro residues" evidence="5">
    <location>
        <begin position="233"/>
        <end position="242"/>
    </location>
</feature>
<feature type="compositionally biased region" description="Basic and acidic residues" evidence="5">
    <location>
        <begin position="252"/>
        <end position="265"/>
    </location>
</feature>
<feature type="compositionally biased region" description="Low complexity" evidence="5">
    <location>
        <begin position="313"/>
        <end position="327"/>
    </location>
</feature>
<feature type="compositionally biased region" description="Basic and acidic residues" evidence="5">
    <location>
        <begin position="360"/>
        <end position="371"/>
    </location>
</feature>
<feature type="compositionally biased region" description="Pro residues" evidence="5">
    <location>
        <begin position="375"/>
        <end position="386"/>
    </location>
</feature>
<feature type="compositionally biased region" description="Acidic residues" evidence="5">
    <location>
        <begin position="437"/>
        <end position="446"/>
    </location>
</feature>
<feature type="modified residue" description="Phosphotyrosine; by SYK" evidence="6">
    <location>
        <position position="174"/>
    </location>
</feature>
<feature type="modified residue" description="Phosphotyrosine; by SYK" evidence="6">
    <location>
        <position position="183"/>
    </location>
</feature>
<feature type="modified residue" description="Phosphoserine" evidence="7">
    <location>
        <position position="277"/>
    </location>
</feature>
<feature type="modified residue" description="Phosphoserine" evidence="2">
    <location>
        <position position="414"/>
    </location>
</feature>
<feature type="modified residue" description="Phosphoserine" evidence="2">
    <location>
        <position position="425"/>
    </location>
</feature>
<feature type="modified residue" description="Phosphotyrosine; by SYK" evidence="6">
    <location>
        <position position="446"/>
    </location>
</feature>
<comment type="function">
    <text evidence="1">Binds differentially to the SH3 domains of certain proteins of signal transduction pathways. Binds to phosphatidylinositols; linking the hemopoietic tyrosine kinase fes to the cytoplasmic membrane in a phosphorylation dependent mechanism (By similarity).</text>
</comment>
<comment type="interaction">
    <interactant intactId="EBI-5323518">
        <id>Q06649</id>
    </interactant>
    <interactant intactId="EBI-4398527">
        <id>Q9H2K2</id>
        <label>TNKS2</label>
    </interactant>
    <organismsDiffer>true</organismsDiffer>
    <experiments>6</experiments>
</comment>
<comment type="PTM">
    <text evidence="6">Phosphorylated. Phosphorylation at Tyr-446 may stimulate the activity of the LYN kinase.</text>
</comment>
<evidence type="ECO:0000250" key="1"/>
<evidence type="ECO:0000250" key="2">
    <source>
        <dbReference type="UniProtKB" id="P78314"/>
    </source>
</evidence>
<evidence type="ECO:0000255" key="3">
    <source>
        <dbReference type="PROSITE-ProRule" id="PRU00145"/>
    </source>
</evidence>
<evidence type="ECO:0000255" key="4">
    <source>
        <dbReference type="PROSITE-ProRule" id="PRU00191"/>
    </source>
</evidence>
<evidence type="ECO:0000256" key="5">
    <source>
        <dbReference type="SAM" id="MobiDB-lite"/>
    </source>
</evidence>
<evidence type="ECO:0000269" key="6">
    <source>
    </source>
</evidence>
<evidence type="ECO:0007744" key="7">
    <source>
    </source>
</evidence>
<protein>
    <recommendedName>
        <fullName>SH3 domain-binding protein 2</fullName>
        <shortName>3BP-2</shortName>
    </recommendedName>
</protein>
<proteinExistence type="evidence at protein level"/>
<organism>
    <name type="scientific">Mus musculus</name>
    <name type="common">Mouse</name>
    <dbReference type="NCBI Taxonomy" id="10090"/>
    <lineage>
        <taxon>Eukaryota</taxon>
        <taxon>Metazoa</taxon>
        <taxon>Chordata</taxon>
        <taxon>Craniata</taxon>
        <taxon>Vertebrata</taxon>
        <taxon>Euteleostomi</taxon>
        <taxon>Mammalia</taxon>
        <taxon>Eutheria</taxon>
        <taxon>Euarchontoglires</taxon>
        <taxon>Glires</taxon>
        <taxon>Rodentia</taxon>
        <taxon>Myomorpha</taxon>
        <taxon>Muroidea</taxon>
        <taxon>Muridae</taxon>
        <taxon>Murinae</taxon>
        <taxon>Mus</taxon>
        <taxon>Mus</taxon>
    </lineage>
</organism>
<gene>
    <name type="primary">Sh3bp2</name>
    <name type="synonym">3bp2</name>
</gene>
<keyword id="KW-0597">Phosphoprotein</keyword>
<keyword id="KW-1185">Reference proteome</keyword>
<keyword id="KW-0727">SH2 domain</keyword>
<keyword id="KW-0729">SH3-binding</keyword>
<dbReference type="EMBL" id="L14543">
    <property type="protein sequence ID" value="AAA37121.1"/>
    <property type="molecule type" value="mRNA"/>
</dbReference>
<dbReference type="CCDS" id="CCDS19215.1"/>
<dbReference type="PIR" id="I49444">
    <property type="entry name" value="I49444"/>
</dbReference>
<dbReference type="SMR" id="Q06649"/>
<dbReference type="FunCoup" id="Q06649">
    <property type="interactions" value="208"/>
</dbReference>
<dbReference type="IntAct" id="Q06649">
    <property type="interactions" value="8"/>
</dbReference>
<dbReference type="MINT" id="Q06649"/>
<dbReference type="STRING" id="10090.ENSMUSP00000112554"/>
<dbReference type="iPTMnet" id="Q06649"/>
<dbReference type="PhosphoSitePlus" id="Q06649"/>
<dbReference type="PaxDb" id="10090-ENSMUSP00000112554"/>
<dbReference type="ProteomicsDB" id="285892"/>
<dbReference type="Pumba" id="Q06649"/>
<dbReference type="AGR" id="MGI:1346349"/>
<dbReference type="MGI" id="MGI:1346349">
    <property type="gene designation" value="Sh3bp2"/>
</dbReference>
<dbReference type="eggNOG" id="ENOG502RF2Z">
    <property type="taxonomic scope" value="Eukaryota"/>
</dbReference>
<dbReference type="InParanoid" id="Q06649"/>
<dbReference type="PhylomeDB" id="Q06649"/>
<dbReference type="ChiTaRS" id="Sh3bp2">
    <property type="organism name" value="mouse"/>
</dbReference>
<dbReference type="PRO" id="PR:Q06649"/>
<dbReference type="Proteomes" id="UP000000589">
    <property type="component" value="Unplaced"/>
</dbReference>
<dbReference type="RNAct" id="Q06649">
    <property type="molecule type" value="protein"/>
</dbReference>
<dbReference type="GO" id="GO:0017124">
    <property type="term" value="F:SH3 domain binding"/>
    <property type="evidence" value="ECO:0000353"/>
    <property type="project" value="MGI"/>
</dbReference>
<dbReference type="GO" id="GO:0007165">
    <property type="term" value="P:signal transduction"/>
    <property type="evidence" value="ECO:0007669"/>
    <property type="project" value="InterPro"/>
</dbReference>
<dbReference type="CDD" id="cd13308">
    <property type="entry name" value="PH_3BP2"/>
    <property type="match status" value="1"/>
</dbReference>
<dbReference type="CDD" id="cd10359">
    <property type="entry name" value="SH2_SH3BP2"/>
    <property type="match status" value="1"/>
</dbReference>
<dbReference type="FunFam" id="3.30.505.10:FF:000043">
    <property type="entry name" value="SH3 domain binding protein 2"/>
    <property type="match status" value="1"/>
</dbReference>
<dbReference type="FunFam" id="2.30.29.30:FF:000147">
    <property type="entry name" value="SH3 domain-binding protein 2 isoform X2"/>
    <property type="match status" value="1"/>
</dbReference>
<dbReference type="Gene3D" id="2.30.29.30">
    <property type="entry name" value="Pleckstrin-homology domain (PH domain)/Phosphotyrosine-binding domain (PTB)"/>
    <property type="match status" value="1"/>
</dbReference>
<dbReference type="Gene3D" id="3.30.505.10">
    <property type="entry name" value="SH2 domain"/>
    <property type="match status" value="1"/>
</dbReference>
<dbReference type="InterPro" id="IPR011993">
    <property type="entry name" value="PH-like_dom_sf"/>
</dbReference>
<dbReference type="InterPro" id="IPR001849">
    <property type="entry name" value="PH_domain"/>
</dbReference>
<dbReference type="InterPro" id="IPR000980">
    <property type="entry name" value="SH2"/>
</dbReference>
<dbReference type="InterPro" id="IPR036860">
    <property type="entry name" value="SH2_dom_sf"/>
</dbReference>
<dbReference type="InterPro" id="IPR035848">
    <property type="entry name" value="SH3BP2"/>
</dbReference>
<dbReference type="InterPro" id="IPR035847">
    <property type="entry name" value="SH3BP2_SH2"/>
</dbReference>
<dbReference type="PANTHER" id="PTHR15126:SF4">
    <property type="entry name" value="SH3 DOMAIN-BINDING PROTEIN 2"/>
    <property type="match status" value="1"/>
</dbReference>
<dbReference type="PANTHER" id="PTHR15126">
    <property type="entry name" value="SH3-BINDING"/>
    <property type="match status" value="1"/>
</dbReference>
<dbReference type="Pfam" id="PF00169">
    <property type="entry name" value="PH"/>
    <property type="match status" value="1"/>
</dbReference>
<dbReference type="Pfam" id="PF00017">
    <property type="entry name" value="SH2"/>
    <property type="match status" value="1"/>
</dbReference>
<dbReference type="SMART" id="SM00233">
    <property type="entry name" value="PH"/>
    <property type="match status" value="1"/>
</dbReference>
<dbReference type="SMART" id="SM00252">
    <property type="entry name" value="SH2"/>
    <property type="match status" value="1"/>
</dbReference>
<dbReference type="SUPFAM" id="SSF50729">
    <property type="entry name" value="PH domain-like"/>
    <property type="match status" value="1"/>
</dbReference>
<dbReference type="SUPFAM" id="SSF55550">
    <property type="entry name" value="SH2 domain"/>
    <property type="match status" value="1"/>
</dbReference>
<dbReference type="PROSITE" id="PS50003">
    <property type="entry name" value="PH_DOMAIN"/>
    <property type="match status" value="1"/>
</dbReference>
<dbReference type="PROSITE" id="PS50001">
    <property type="entry name" value="SH2"/>
    <property type="match status" value="1"/>
</dbReference>
<reference key="1">
    <citation type="journal article" date="1993" name="Science">
        <title>Identification of a ten-amino acid proline-rich SH3 binding site.</title>
        <authorList>
            <person name="Ren R."/>
            <person name="Mayer B.J."/>
            <person name="Cicchetti P."/>
            <person name="Baltimore D."/>
        </authorList>
    </citation>
    <scope>NUCLEOTIDE SEQUENCE [MRNA]</scope>
</reference>
<reference key="2">
    <citation type="journal article" date="2003" name="J. Biol. Chem.">
        <title>Adaptor protein 3BP2 is a potential ligand of Src homology 2 and 3 domains of Lyn protein-tyrosine kinase.</title>
        <authorList>
            <person name="Maeno K."/>
            <person name="Sada K."/>
            <person name="Kyo S."/>
            <person name="Miah S.M."/>
            <person name="Kawauchi-Kamata K."/>
            <person name="Qu X."/>
            <person name="Shi Y."/>
            <person name="Yamamura H."/>
        </authorList>
    </citation>
    <scope>PHOSPHORYLATION AT TYR-174; TYR-183 AND TYR-446</scope>
</reference>
<reference key="3">
    <citation type="journal article" date="2007" name="Proc. Natl. Acad. Sci. U.S.A.">
        <title>Large-scale phosphorylation analysis of mouse liver.</title>
        <authorList>
            <person name="Villen J."/>
            <person name="Beausoleil S.A."/>
            <person name="Gerber S.A."/>
            <person name="Gygi S.P."/>
        </authorList>
    </citation>
    <scope>IDENTIFICATION BY MASS SPECTROMETRY [LARGE SCALE ANALYSIS]</scope>
    <source>
        <tissue>Liver</tissue>
    </source>
</reference>
<reference key="4">
    <citation type="journal article" date="2010" name="Cell">
        <title>A tissue-specific atlas of mouse protein phosphorylation and expression.</title>
        <authorList>
            <person name="Huttlin E.L."/>
            <person name="Jedrychowski M.P."/>
            <person name="Elias J.E."/>
            <person name="Goswami T."/>
            <person name="Rad R."/>
            <person name="Beausoleil S.A."/>
            <person name="Villen J."/>
            <person name="Haas W."/>
            <person name="Sowa M.E."/>
            <person name="Gygi S.P."/>
        </authorList>
    </citation>
    <scope>PHOSPHORYLATION [LARGE SCALE ANALYSIS] AT SER-277</scope>
    <scope>IDENTIFICATION BY MASS SPECTROMETRY [LARGE SCALE ANALYSIS]</scope>
    <source>
        <tissue>Kidney</tissue>
        <tissue>Liver</tissue>
        <tissue>Spleen</tissue>
    </source>
</reference>
<sequence length="559" mass="62208">MAAEEMQWPVPMKAIGAQNLLTMPGGVAKAGYLHKKGGTQLQLLKWPLRFVIIHKRCIYYFKSSTSASPQGAFSLSGYNRVMRAAEETTSNNVFPFKIIHISKKHRTWFFSASSEDERKSWMAFVRREIGHFHEKKELPLDTSDSSSDTDSFYGAVERPIDISLSSYPMDNEDYEHEDEDDSYLEPDSPGPMKLEDALTYPPAYPPPPVPVPRKPAFSDLPRAHSFTSKSPSPLLPPPPPKRGLPDTGSAPEDAKDALGLRRVEPGLRVPATPRRMSDPPMSNVPTVPNLRKHPCFRDSVNPGLEPWTPGHGTSSVSSSTTMAVATSRNCDKLKSFHLSSRGPPTSEPPPVPANKPKFLKIAEEPSPREAAKFAPVPPVAPRPPVQKMPMPEATVRPAVLPRPENTPLPHLQRSPPDGQSFRGFSFEKARQPSQADTGEEDSDEDYEKVPLPNSVFVNTTESCEVERLFKATDPRGEPQDGLYCIRNSSTKSGKVLVVWDESSNKVRNYRIFEKDSKFYLEGEVLFASVGSMVEHYHTHVLPSHQSLLLRHPYGYAGPR</sequence>